<gene>
    <name evidence="6 7" type="primary">TRBJ1-3</name>
</gene>
<feature type="chain" id="PRO_0000447250" description="T cell receptor beta joining 1-3">
    <location>
        <begin position="1" status="less than"/>
        <end position="16" status="greater than"/>
    </location>
</feature>
<feature type="non-terminal residue">
    <location>
        <position position="1"/>
    </location>
</feature>
<feature type="non-terminal residue">
    <location>
        <position position="16"/>
    </location>
</feature>
<protein>
    <recommendedName>
        <fullName evidence="6">T cell receptor beta joining 1-3</fullName>
    </recommendedName>
</protein>
<evidence type="ECO:0000303" key="1">
    <source>
    </source>
</evidence>
<evidence type="ECO:0000303" key="2">
    <source>
    </source>
</evidence>
<evidence type="ECO:0000303" key="3">
    <source>
    </source>
</evidence>
<evidence type="ECO:0000303" key="4">
    <source>
    </source>
</evidence>
<evidence type="ECO:0000303" key="5">
    <source>
    </source>
</evidence>
<evidence type="ECO:0000303" key="6">
    <source ref="2"/>
</evidence>
<evidence type="ECO:0000312" key="7">
    <source>
        <dbReference type="HGNC" id="HGNC:12164"/>
    </source>
</evidence>
<accession>A0A0J9YWP8</accession>
<name>TJB13_HUMAN</name>
<organism>
    <name type="scientific">Homo sapiens</name>
    <name type="common">Human</name>
    <dbReference type="NCBI Taxonomy" id="9606"/>
    <lineage>
        <taxon>Eukaryota</taxon>
        <taxon>Metazoa</taxon>
        <taxon>Chordata</taxon>
        <taxon>Craniata</taxon>
        <taxon>Vertebrata</taxon>
        <taxon>Euteleostomi</taxon>
        <taxon>Mammalia</taxon>
        <taxon>Eutheria</taxon>
        <taxon>Euarchontoglires</taxon>
        <taxon>Primates</taxon>
        <taxon>Haplorrhini</taxon>
        <taxon>Catarrhini</taxon>
        <taxon>Hominidae</taxon>
        <taxon>Homo</taxon>
    </lineage>
</organism>
<comment type="function">
    <text evidence="1 3 4 5">J region of the variable domain of T cell receptor (TR) beta chain that participates in the antigen recognition (PubMed:24600447). Alpha-beta T cell receptors are antigen specific receptors which are essential to the immune response and are present on the cell surface of T lymphocytes. Recognize peptide-major histocompatibility (MH) (pMH) complexes that are displayed by antigen presenting cells (APC), a prerequisite for efficient T cell adaptive immunity against pathogens (PubMed:25493333). Binding of alpha-beta TR to pMH complex initiates TR-CD3 clustering on the cell surface and intracellular activation of LCK that phosphorylates the ITAM motifs of CD3G, CD3D, CD3E and CD247 enabling the recruitment of ZAP70. In turn ZAP70 phosphorylates LAT, which recruits numerous signaling molecules to form the LAT signalosome. The LAT signalosome propagates signal branching to three major signaling pathways, the calcium, the mitogen-activated protein kinase (MAPK) kinase and the nuclear factor NF-kappa-B (NF-kB) pathways, leading to the mobilization of transcription factors that are critical for gene expression and essential for T cell growth and differentiation (PubMed:23524462). The T cell repertoire is generated in the thymus, by V-(D)-J rearrangement. This repertoire is then shaped by intrathymic selection events to generate a peripheral T cell pool of self-MH restricted, non-autoaggressive T cells. Post-thymic interaction of alpha-beta TR with the pMH complexes shapes TR structural and functional avidity (PubMed:15040585).</text>
</comment>
<comment type="subunit">
    <text evidence="2">Alpha-beta TR is a heterodimer composed of an alpha and beta chain; disulfide-linked. The alpha-beta TR is associated with the transmembrane signaling CD3 coreceptor proteins to form the TR-CD3 (TcR or TCR). The assembly of alpha-beta TR heterodimers with CD3 occurs in the endoplasmic reticulum where a single alpha-beta TR heterodimer associates with one CD3D-CD3E heterodimer, one CD3G-CD3E heterodimer and one CD247 homodimer forming a stable octameric structure. CD3D-CD3E and CD3G-CD3E heterodimers preferentially associate with TR alpha and TR beta chains, respectively. The association of the CD247 homodimer is the last step of TcR assembly in the endoplasmic reticulum and is required for transport to the cell surface.</text>
</comment>
<comment type="subcellular location">
    <subcellularLocation>
        <location evidence="2">Cell membrane</location>
    </subcellularLocation>
</comment>
<proteinExistence type="predicted"/>
<dbReference type="EMBL" id="AC239618">
    <property type="status" value="NOT_ANNOTATED_CDS"/>
    <property type="molecule type" value="Genomic_DNA"/>
</dbReference>
<dbReference type="EMBL" id="AC245427">
    <property type="status" value="NOT_ANNOTATED_CDS"/>
    <property type="molecule type" value="Genomic_DNA"/>
</dbReference>
<dbReference type="IMGT_GENE-DB" id="TRBJ1-3"/>
<dbReference type="BioMuta" id="ENSG00000282133"/>
<dbReference type="Ensembl" id="ENST00000633780.1">
    <property type="protein sequence ID" value="ENSP00000488060.1"/>
    <property type="gene ID" value="ENSG00000282133.1"/>
</dbReference>
<dbReference type="Ensembl" id="ENST00000633936.1">
    <property type="protein sequence ID" value="ENSP00000488093.1"/>
    <property type="gene ID" value="ENSG00000282500.1"/>
</dbReference>
<dbReference type="AGR" id="HGNC:12164"/>
<dbReference type="GeneCards" id="TRBJ1-3"/>
<dbReference type="HGNC" id="HGNC:12164">
    <property type="gene designation" value="TRBJ1-3"/>
</dbReference>
<dbReference type="HPA" id="ENSG00000282133">
    <property type="expression patterns" value="Tissue enriched (lymphoid)"/>
</dbReference>
<dbReference type="neXtProt" id="NX_A0A0J9YWP8"/>
<dbReference type="VEuPathDB" id="HostDB:ENSG00000282133"/>
<dbReference type="InParanoid" id="A0A0J9YWP8"/>
<dbReference type="PAN-GO" id="A0A0J9YWP8">
    <property type="GO annotations" value="0 GO annotations based on evolutionary models"/>
</dbReference>
<dbReference type="ChiTaRS" id="TRBJ1-3">
    <property type="organism name" value="human"/>
</dbReference>
<dbReference type="PRO" id="PR:A0A0J9YWP8"/>
<dbReference type="Proteomes" id="UP000005640">
    <property type="component" value="Chromosome 7"/>
</dbReference>
<dbReference type="Bgee" id="ENSG00000282133">
    <property type="expression patterns" value="Expressed in granulocyte and 89 other cell types or tissues"/>
</dbReference>
<dbReference type="GO" id="GO:0042101">
    <property type="term" value="C:T cell receptor complex"/>
    <property type="evidence" value="ECO:0007669"/>
    <property type="project" value="UniProtKB-KW"/>
</dbReference>
<dbReference type="GO" id="GO:0002250">
    <property type="term" value="P:adaptive immune response"/>
    <property type="evidence" value="ECO:0007669"/>
    <property type="project" value="UniProtKB-KW"/>
</dbReference>
<reference key="1">
    <citation type="journal article" date="2003" name="Nature">
        <title>The DNA sequence of human chromosome 7.</title>
        <authorList>
            <person name="Hillier L.W."/>
            <person name="Fulton R.S."/>
            <person name="Fulton L.A."/>
            <person name="Graves T.A."/>
            <person name="Pepin K.H."/>
            <person name="Wagner-McPherson C."/>
            <person name="Layman D."/>
            <person name="Maas J."/>
            <person name="Jaeger S."/>
            <person name="Walker R."/>
            <person name="Wylie K."/>
            <person name="Sekhon M."/>
            <person name="Becker M.C."/>
            <person name="O'Laughlin M.D."/>
            <person name="Schaller M.E."/>
            <person name="Fewell G.A."/>
            <person name="Delehaunty K.D."/>
            <person name="Miner T.L."/>
            <person name="Nash W.E."/>
            <person name="Cordes M."/>
            <person name="Du H."/>
            <person name="Sun H."/>
            <person name="Edwards J."/>
            <person name="Bradshaw-Cordum H."/>
            <person name="Ali J."/>
            <person name="Andrews S."/>
            <person name="Isak A."/>
            <person name="Vanbrunt A."/>
            <person name="Nguyen C."/>
            <person name="Du F."/>
            <person name="Lamar B."/>
            <person name="Courtney L."/>
            <person name="Kalicki J."/>
            <person name="Ozersky P."/>
            <person name="Bielicki L."/>
            <person name="Scott K."/>
            <person name="Holmes A."/>
            <person name="Harkins R."/>
            <person name="Harris A."/>
            <person name="Strong C.M."/>
            <person name="Hou S."/>
            <person name="Tomlinson C."/>
            <person name="Dauphin-Kohlberg S."/>
            <person name="Kozlowicz-Reilly A."/>
            <person name="Leonard S."/>
            <person name="Rohlfing T."/>
            <person name="Rock S.M."/>
            <person name="Tin-Wollam A.-M."/>
            <person name="Abbott A."/>
            <person name="Minx P."/>
            <person name="Maupin R."/>
            <person name="Strowmatt C."/>
            <person name="Latreille P."/>
            <person name="Miller N."/>
            <person name="Johnson D."/>
            <person name="Murray J."/>
            <person name="Woessner J.P."/>
            <person name="Wendl M.C."/>
            <person name="Yang S.-P."/>
            <person name="Schultz B.R."/>
            <person name="Wallis J.W."/>
            <person name="Spieth J."/>
            <person name="Bieri T.A."/>
            <person name="Nelson J.O."/>
            <person name="Berkowicz N."/>
            <person name="Wohldmann P.E."/>
            <person name="Cook L.L."/>
            <person name="Hickenbotham M.T."/>
            <person name="Eldred J."/>
            <person name="Williams D."/>
            <person name="Bedell J.A."/>
            <person name="Mardis E.R."/>
            <person name="Clifton S.W."/>
            <person name="Chissoe S.L."/>
            <person name="Marra M.A."/>
            <person name="Raymond C."/>
            <person name="Haugen E."/>
            <person name="Gillett W."/>
            <person name="Zhou Y."/>
            <person name="James R."/>
            <person name="Phelps K."/>
            <person name="Iadanoto S."/>
            <person name="Bubb K."/>
            <person name="Simms E."/>
            <person name="Levy R."/>
            <person name="Clendenning J."/>
            <person name="Kaul R."/>
            <person name="Kent W.J."/>
            <person name="Furey T.S."/>
            <person name="Baertsch R.A."/>
            <person name="Brent M.R."/>
            <person name="Keibler E."/>
            <person name="Flicek P."/>
            <person name="Bork P."/>
            <person name="Suyama M."/>
            <person name="Bailey J.A."/>
            <person name="Portnoy M.E."/>
            <person name="Torrents D."/>
            <person name="Chinwalla A.T."/>
            <person name="Gish W.R."/>
            <person name="Eddy S.R."/>
            <person name="McPherson J.D."/>
            <person name="Olson M.V."/>
            <person name="Eichler E.E."/>
            <person name="Green E.D."/>
            <person name="Waterston R.H."/>
            <person name="Wilson R.K."/>
        </authorList>
    </citation>
    <scope>NUCLEOTIDE SEQUENCE [LARGE SCALE GENOMIC DNA] (IMGT ALLELE TRBJ1-3*01)</scope>
</reference>
<reference key="2">
    <citation type="book" date="2001" name="The T Cell Receptor FactsBook.">
        <title>The T Cell Receptor FactsBook.</title>
        <editorList>
            <person name="Lefranc M.P."/>
            <person name="Lefranc G."/>
        </editorList>
        <authorList>
            <person name="Lefranc M.P."/>
            <person name="Lefranc G."/>
        </authorList>
    </citation>
    <scope>NOMENCLATURE</scope>
</reference>
<reference key="3">
    <citation type="journal article" date="2004" name="Nat. Rev. Immunol.">
        <title>The many important facets of T-cell repertoire diversity.</title>
        <authorList>
            <person name="Nikolich-Zugich J."/>
            <person name="Slifka M.K."/>
            <person name="Messaoudi I."/>
        </authorList>
    </citation>
    <scope>REVIEW ON T CELL REPERTOIRE DIVERSITY</scope>
</reference>
<reference key="4">
    <citation type="journal article" date="2010" name="Cold Spring Harb. Perspect. Biol.">
        <title>Structural biology of the T-cell receptor: insights into receptor assembly, ligand recognition, and initiation of signaling.</title>
        <authorList>
            <person name="Wucherpfennig K.W."/>
            <person name="Gagnon E."/>
            <person name="Call M.J."/>
            <person name="Huseby E.S."/>
            <person name="Call M.E."/>
        </authorList>
    </citation>
    <scope>REVIEW ON T CELL RECEPTOR-CD3 COMPLEX ASSEMBLY</scope>
    <scope>SUBCELLULAR LOCATION</scope>
</reference>
<reference key="5">
    <citation type="journal article" date="2013" name="Nat. Rev. Immunol.">
        <title>T cell receptor signalling networks: branched, diversified and bounded.</title>
        <authorList>
            <person name="Brownlie R.J."/>
            <person name="Zamoyska R."/>
        </authorList>
    </citation>
    <scope>REVIEW ON T CELL RECEPTOR SIGNALING</scope>
</reference>
<reference key="6">
    <citation type="journal article" date="2014" name="Front. Immunol.">
        <title>Immunoglobulin and T Cell Receptor Genes: IMGT((R)) and the Birth and Rise of Immunoinformatics.</title>
        <authorList>
            <person name="Lefranc M.P."/>
        </authorList>
    </citation>
    <scope>NOMENCLATURE</scope>
</reference>
<reference key="7">
    <citation type="journal article" date="2015" name="Annu. Rev. Immunol.">
        <title>T cell antigen receptor recognition of antigen-presenting molecules.</title>
        <authorList>
            <person name="Rossjohn J."/>
            <person name="Gras S."/>
            <person name="Miles J.J."/>
            <person name="Turner S.J."/>
            <person name="Godfrey D.I."/>
            <person name="McCluskey J."/>
        </authorList>
    </citation>
    <scope>REVIEW ON FUNCTION</scope>
</reference>
<sequence length="16" mass="1730">SGNTIYFGEGSWLTVV</sequence>
<keyword id="KW-1064">Adaptive immunity</keyword>
<keyword id="KW-1003">Cell membrane</keyword>
<keyword id="KW-0391">Immunity</keyword>
<keyword id="KW-0472">Membrane</keyword>
<keyword id="KW-0675">Receptor</keyword>
<keyword id="KW-1185">Reference proteome</keyword>
<keyword id="KW-1279">T cell receptor</keyword>